<comment type="function">
    <text evidence="1">May play a role in DNA repair. It seems to be involved in an RecBC-independent recombinational process of DNA repair. It may act with RecF and RecO.</text>
</comment>
<comment type="similarity">
    <text evidence="1">Belongs to the RecR family.</text>
</comment>
<gene>
    <name evidence="1" type="primary">recR</name>
    <name type="ordered locus">LBJ_3003</name>
</gene>
<evidence type="ECO:0000255" key="1">
    <source>
        <dbReference type="HAMAP-Rule" id="MF_00017"/>
    </source>
</evidence>
<accession>Q04NX9</accession>
<dbReference type="EMBL" id="CP000350">
    <property type="protein sequence ID" value="ABJ77391.1"/>
    <property type="molecule type" value="Genomic_DNA"/>
</dbReference>
<dbReference type="SMR" id="Q04NX9"/>
<dbReference type="KEGG" id="lbj:LBJ_3003"/>
<dbReference type="HOGENOM" id="CLU_060739_1_0_12"/>
<dbReference type="Proteomes" id="UP000000656">
    <property type="component" value="Chromosome 1"/>
</dbReference>
<dbReference type="GO" id="GO:0003677">
    <property type="term" value="F:DNA binding"/>
    <property type="evidence" value="ECO:0007669"/>
    <property type="project" value="UniProtKB-UniRule"/>
</dbReference>
<dbReference type="GO" id="GO:0008270">
    <property type="term" value="F:zinc ion binding"/>
    <property type="evidence" value="ECO:0007669"/>
    <property type="project" value="UniProtKB-KW"/>
</dbReference>
<dbReference type="GO" id="GO:0006310">
    <property type="term" value="P:DNA recombination"/>
    <property type="evidence" value="ECO:0007669"/>
    <property type="project" value="UniProtKB-UniRule"/>
</dbReference>
<dbReference type="GO" id="GO:0006281">
    <property type="term" value="P:DNA repair"/>
    <property type="evidence" value="ECO:0007669"/>
    <property type="project" value="UniProtKB-UniRule"/>
</dbReference>
<dbReference type="CDD" id="cd01025">
    <property type="entry name" value="TOPRIM_recR"/>
    <property type="match status" value="1"/>
</dbReference>
<dbReference type="Gene3D" id="3.40.1360.10">
    <property type="match status" value="1"/>
</dbReference>
<dbReference type="Gene3D" id="6.10.250.240">
    <property type="match status" value="1"/>
</dbReference>
<dbReference type="Gene3D" id="1.10.8.420">
    <property type="entry name" value="RecR Domain 1"/>
    <property type="match status" value="1"/>
</dbReference>
<dbReference type="HAMAP" id="MF_00017">
    <property type="entry name" value="RecR"/>
    <property type="match status" value="1"/>
</dbReference>
<dbReference type="InterPro" id="IPR000093">
    <property type="entry name" value="DNA_Rcmb_RecR"/>
</dbReference>
<dbReference type="InterPro" id="IPR023627">
    <property type="entry name" value="Rcmb_RecR"/>
</dbReference>
<dbReference type="InterPro" id="IPR015967">
    <property type="entry name" value="Rcmb_RecR_Znf"/>
</dbReference>
<dbReference type="InterPro" id="IPR006171">
    <property type="entry name" value="TOPRIM_dom"/>
</dbReference>
<dbReference type="InterPro" id="IPR034137">
    <property type="entry name" value="TOPRIM_RecR"/>
</dbReference>
<dbReference type="NCBIfam" id="TIGR00615">
    <property type="entry name" value="recR"/>
    <property type="match status" value="1"/>
</dbReference>
<dbReference type="PANTHER" id="PTHR30446">
    <property type="entry name" value="RECOMBINATION PROTEIN RECR"/>
    <property type="match status" value="1"/>
</dbReference>
<dbReference type="PANTHER" id="PTHR30446:SF0">
    <property type="entry name" value="RECOMBINATION PROTEIN RECR"/>
    <property type="match status" value="1"/>
</dbReference>
<dbReference type="Pfam" id="PF21176">
    <property type="entry name" value="RecR_HhH"/>
    <property type="match status" value="1"/>
</dbReference>
<dbReference type="Pfam" id="PF02132">
    <property type="entry name" value="RecR_ZnF"/>
    <property type="match status" value="1"/>
</dbReference>
<dbReference type="Pfam" id="PF13662">
    <property type="entry name" value="Toprim_4"/>
    <property type="match status" value="1"/>
</dbReference>
<dbReference type="SMART" id="SM00493">
    <property type="entry name" value="TOPRIM"/>
    <property type="match status" value="1"/>
</dbReference>
<dbReference type="SUPFAM" id="SSF111304">
    <property type="entry name" value="Recombination protein RecR"/>
    <property type="match status" value="1"/>
</dbReference>
<dbReference type="PROSITE" id="PS01300">
    <property type="entry name" value="RECR"/>
    <property type="match status" value="1"/>
</dbReference>
<dbReference type="PROSITE" id="PS50880">
    <property type="entry name" value="TOPRIM"/>
    <property type="match status" value="1"/>
</dbReference>
<feature type="chain" id="PRO_0000322902" description="Recombination protein RecR">
    <location>
        <begin position="1"/>
        <end position="197"/>
    </location>
</feature>
<feature type="domain" description="Toprim" evidence="1">
    <location>
        <begin position="79"/>
        <end position="174"/>
    </location>
</feature>
<feature type="zinc finger region" description="C4-type" evidence="1">
    <location>
        <begin position="56"/>
        <end position="71"/>
    </location>
</feature>
<name>RECR_LEPBJ</name>
<organism>
    <name type="scientific">Leptospira borgpetersenii serovar Hardjo-bovis (strain JB197)</name>
    <dbReference type="NCBI Taxonomy" id="355277"/>
    <lineage>
        <taxon>Bacteria</taxon>
        <taxon>Pseudomonadati</taxon>
        <taxon>Spirochaetota</taxon>
        <taxon>Spirochaetia</taxon>
        <taxon>Leptospirales</taxon>
        <taxon>Leptospiraceae</taxon>
        <taxon>Leptospira</taxon>
    </lineage>
</organism>
<reference key="1">
    <citation type="journal article" date="2006" name="Proc. Natl. Acad. Sci. U.S.A.">
        <title>Genome reduction in Leptospira borgpetersenii reflects limited transmission potential.</title>
        <authorList>
            <person name="Bulach D.M."/>
            <person name="Zuerner R.L."/>
            <person name="Wilson P."/>
            <person name="Seemann T."/>
            <person name="McGrath A."/>
            <person name="Cullen P.A."/>
            <person name="Davis J."/>
            <person name="Johnson M."/>
            <person name="Kuczek E."/>
            <person name="Alt D.P."/>
            <person name="Peterson-Burch B."/>
            <person name="Coppel R.L."/>
            <person name="Rood J.I."/>
            <person name="Davies J.K."/>
            <person name="Adler B."/>
        </authorList>
    </citation>
    <scope>NUCLEOTIDE SEQUENCE [LARGE SCALE GENOMIC DNA]</scope>
    <source>
        <strain>JB197</strain>
    </source>
</reference>
<sequence length="197" mass="22253">MANHLLEEMVDALSSLPGIGRKSAFRISFHLLRLEQGHFNHFIHQLTNTKNKIKFCKRCGSYAETEICNICTSEKRDTHTFCVVEQPEDIFFIENTREFHGKYHVLNGVISPLEGIGPKDLRIKELLERIEPEQIKEVLVATNPTLEGDATADYLASQLKPLSVDVTRIAYGITVGGSIELADQYTLGRAIRSRLQL</sequence>
<proteinExistence type="inferred from homology"/>
<protein>
    <recommendedName>
        <fullName evidence="1">Recombination protein RecR</fullName>
    </recommendedName>
</protein>
<keyword id="KW-0227">DNA damage</keyword>
<keyword id="KW-0233">DNA recombination</keyword>
<keyword id="KW-0234">DNA repair</keyword>
<keyword id="KW-0479">Metal-binding</keyword>
<keyword id="KW-0862">Zinc</keyword>
<keyword id="KW-0863">Zinc-finger</keyword>